<proteinExistence type="evidence at protein level"/>
<reference key="1">
    <citation type="journal article" date="1998" name="Nature">
        <title>Deciphering the biology of Mycobacterium tuberculosis from the complete genome sequence.</title>
        <authorList>
            <person name="Cole S.T."/>
            <person name="Brosch R."/>
            <person name="Parkhill J."/>
            <person name="Garnier T."/>
            <person name="Churcher C.M."/>
            <person name="Harris D.E."/>
            <person name="Gordon S.V."/>
            <person name="Eiglmeier K."/>
            <person name="Gas S."/>
            <person name="Barry C.E. III"/>
            <person name="Tekaia F."/>
            <person name="Badcock K."/>
            <person name="Basham D."/>
            <person name="Brown D."/>
            <person name="Chillingworth T."/>
            <person name="Connor R."/>
            <person name="Davies R.M."/>
            <person name="Devlin K."/>
            <person name="Feltwell T."/>
            <person name="Gentles S."/>
            <person name="Hamlin N."/>
            <person name="Holroyd S."/>
            <person name="Hornsby T."/>
            <person name="Jagels K."/>
            <person name="Krogh A."/>
            <person name="McLean J."/>
            <person name="Moule S."/>
            <person name="Murphy L.D."/>
            <person name="Oliver S."/>
            <person name="Osborne J."/>
            <person name="Quail M.A."/>
            <person name="Rajandream M.A."/>
            <person name="Rogers J."/>
            <person name="Rutter S."/>
            <person name="Seeger K."/>
            <person name="Skelton S."/>
            <person name="Squares S."/>
            <person name="Squares R."/>
            <person name="Sulston J.E."/>
            <person name="Taylor K."/>
            <person name="Whitehead S."/>
            <person name="Barrell B.G."/>
        </authorList>
    </citation>
    <scope>NUCLEOTIDE SEQUENCE [LARGE SCALE GENOMIC DNA]</scope>
    <source>
        <strain>ATCC 25618 / H37Rv</strain>
    </source>
</reference>
<reference key="2">
    <citation type="journal article" date="2011" name="Mol. Cell. Proteomics">
        <title>Proteogenomic analysis of Mycobacterium tuberculosis by high resolution mass spectrometry.</title>
        <authorList>
            <person name="Kelkar D.S."/>
            <person name="Kumar D."/>
            <person name="Kumar P."/>
            <person name="Balakrishnan L."/>
            <person name="Muthusamy B."/>
            <person name="Yadav A.K."/>
            <person name="Shrivastava P."/>
            <person name="Marimuthu A."/>
            <person name="Anand S."/>
            <person name="Sundaram H."/>
            <person name="Kingsbury R."/>
            <person name="Harsha H.C."/>
            <person name="Nair B."/>
            <person name="Prasad T.S."/>
            <person name="Chauhan D.S."/>
            <person name="Katoch K."/>
            <person name="Katoch V.M."/>
            <person name="Kumar P."/>
            <person name="Chaerkady R."/>
            <person name="Ramachandran S."/>
            <person name="Dash D."/>
            <person name="Pandey A."/>
        </authorList>
    </citation>
    <scope>IDENTIFICATION BY MASS SPECTROMETRY [LARGE SCALE ANALYSIS]</scope>
    <source>
        <strain>ATCC 25618 / H37Rv</strain>
    </source>
</reference>
<reference key="3">
    <citation type="journal article" date="2012" name="Front. Microbiol.">
        <title>Functional characterization and evolution of the isotuberculosinol operon in Mycobacterium tuberculosis and related Mycobacteria.</title>
        <authorList>
            <person name="Mann F.M."/>
            <person name="Xu M."/>
            <person name="Davenport E.K."/>
            <person name="Peters R.J."/>
        </authorList>
    </citation>
    <scope>FUNCTION</scope>
    <scope>CATALYTIC ACTIVITY</scope>
</reference>
<reference key="4">
    <citation type="journal article" date="2015" name="PLoS ONE">
        <title>LytB1 and LytB2 of Mycobacterium tuberculosis are not genetically redundant.</title>
        <authorList>
            <person name="Brown A.C."/>
            <person name="Kokoczka R."/>
            <person name="Parish T."/>
        </authorList>
    </citation>
    <scope>FUNCTION</scope>
    <scope>DISRUPTION PHENOTYPE</scope>
    <source>
        <strain>ATCC 25618 / H37Rv</strain>
    </source>
</reference>
<sequence>MVPTVDMGIPGASVSSRSVADRPNRKRVLLAEPRGYCAGVDRAVETVERALQKHGPPVYVRHEIVHNRHVVDTLAKAGAVFVEETEQVPEGAIVVFSAHGVAPTVHVSASERNLQVIDATCPLVTKVHNEARRFARDDYDILLIGHEGHEEVVGTAGEAPDHVQLVDGVDAVDQVTVRDEDKVVWLSQTTLSVDETMEIVGRLRRRFPKLQDPPSDDICYATQNRQVAVKAMAPECELVIVVGSRNSSNSVRLVEVALGAGARAAHLVDWADDIDSAWLDGVTTVGVTSGASVPEVLVRGVLERLAECGYDIVQPVTTANETLVFALPRELRSPR</sequence>
<gene>
    <name evidence="6" type="primary">ispH2</name>
    <name evidence="4 5 8" type="synonym">lytB2</name>
    <name type="ordered locus">Rv1110</name>
    <name type="ORF">MTV017.63</name>
</gene>
<evidence type="ECO:0000255" key="1">
    <source>
        <dbReference type="HAMAP-Rule" id="MF_00191"/>
    </source>
</evidence>
<evidence type="ECO:0000269" key="2">
    <source>
    </source>
</evidence>
<evidence type="ECO:0000269" key="3">
    <source>
    </source>
</evidence>
<evidence type="ECO:0000303" key="4">
    <source>
    </source>
</evidence>
<evidence type="ECO:0000303" key="5">
    <source>
    </source>
</evidence>
<evidence type="ECO:0000305" key="6"/>
<evidence type="ECO:0000305" key="7">
    <source>
    </source>
</evidence>
<evidence type="ECO:0000312" key="8">
    <source>
        <dbReference type="EMBL" id="CCP43863.1"/>
    </source>
</evidence>
<feature type="chain" id="PRO_0000128841" description="4-hydroxy-3-methylbut-2-enyl diphosphate reductase 2">
    <location>
        <begin position="1"/>
        <end position="335"/>
    </location>
</feature>
<feature type="active site" description="Proton donor" evidence="1">
    <location>
        <position position="151"/>
    </location>
</feature>
<feature type="binding site" evidence="1">
    <location>
        <position position="37"/>
    </location>
    <ligand>
        <name>[4Fe-4S] cluster</name>
        <dbReference type="ChEBI" id="CHEBI:49883"/>
    </ligand>
</feature>
<feature type="binding site" evidence="1">
    <location>
        <position position="66"/>
    </location>
    <ligand>
        <name>(2E)-4-hydroxy-3-methylbut-2-enyl diphosphate</name>
        <dbReference type="ChEBI" id="CHEBI:128753"/>
    </ligand>
</feature>
<feature type="binding site" evidence="1">
    <location>
        <position position="66"/>
    </location>
    <ligand>
        <name>dimethylallyl diphosphate</name>
        <dbReference type="ChEBI" id="CHEBI:57623"/>
    </ligand>
</feature>
<feature type="binding site" evidence="1">
    <location>
        <position position="66"/>
    </location>
    <ligand>
        <name>isopentenyl diphosphate</name>
        <dbReference type="ChEBI" id="CHEBI:128769"/>
    </ligand>
</feature>
<feature type="binding site" evidence="1">
    <location>
        <position position="99"/>
    </location>
    <ligand>
        <name>(2E)-4-hydroxy-3-methylbut-2-enyl diphosphate</name>
        <dbReference type="ChEBI" id="CHEBI:128753"/>
    </ligand>
</feature>
<feature type="binding site" evidence="1">
    <location>
        <position position="99"/>
    </location>
    <ligand>
        <name>dimethylallyl diphosphate</name>
        <dbReference type="ChEBI" id="CHEBI:57623"/>
    </ligand>
</feature>
<feature type="binding site" evidence="1">
    <location>
        <position position="99"/>
    </location>
    <ligand>
        <name>isopentenyl diphosphate</name>
        <dbReference type="ChEBI" id="CHEBI:128769"/>
    </ligand>
</feature>
<feature type="binding site" evidence="1">
    <location>
        <position position="121"/>
    </location>
    <ligand>
        <name>[4Fe-4S] cluster</name>
        <dbReference type="ChEBI" id="CHEBI:49883"/>
    </ligand>
</feature>
<feature type="binding site" evidence="1">
    <location>
        <position position="149"/>
    </location>
    <ligand>
        <name>(2E)-4-hydroxy-3-methylbut-2-enyl diphosphate</name>
        <dbReference type="ChEBI" id="CHEBI:128753"/>
    </ligand>
</feature>
<feature type="binding site" evidence="1">
    <location>
        <position position="149"/>
    </location>
    <ligand>
        <name>dimethylallyl diphosphate</name>
        <dbReference type="ChEBI" id="CHEBI:57623"/>
    </ligand>
</feature>
<feature type="binding site" evidence="1">
    <location>
        <position position="149"/>
    </location>
    <ligand>
        <name>isopentenyl diphosphate</name>
        <dbReference type="ChEBI" id="CHEBI:128769"/>
    </ligand>
</feature>
<feature type="binding site" evidence="1">
    <location>
        <position position="189"/>
    </location>
    <ligand>
        <name>(2E)-4-hydroxy-3-methylbut-2-enyl diphosphate</name>
        <dbReference type="ChEBI" id="CHEBI:128753"/>
    </ligand>
</feature>
<feature type="binding site" evidence="1">
    <location>
        <position position="219"/>
    </location>
    <ligand>
        <name>[4Fe-4S] cluster</name>
        <dbReference type="ChEBI" id="CHEBI:49883"/>
    </ligand>
</feature>
<feature type="binding site" evidence="1">
    <location>
        <position position="247"/>
    </location>
    <ligand>
        <name>(2E)-4-hydroxy-3-methylbut-2-enyl diphosphate</name>
        <dbReference type="ChEBI" id="CHEBI:128753"/>
    </ligand>
</feature>
<feature type="binding site" evidence="1">
    <location>
        <position position="247"/>
    </location>
    <ligand>
        <name>dimethylallyl diphosphate</name>
        <dbReference type="ChEBI" id="CHEBI:57623"/>
    </ligand>
</feature>
<feature type="binding site" evidence="1">
    <location>
        <position position="247"/>
    </location>
    <ligand>
        <name>isopentenyl diphosphate</name>
        <dbReference type="ChEBI" id="CHEBI:128769"/>
    </ligand>
</feature>
<feature type="binding site" evidence="1">
    <location>
        <position position="248"/>
    </location>
    <ligand>
        <name>(2E)-4-hydroxy-3-methylbut-2-enyl diphosphate</name>
        <dbReference type="ChEBI" id="CHEBI:128753"/>
    </ligand>
</feature>
<feature type="binding site" evidence="1">
    <location>
        <position position="248"/>
    </location>
    <ligand>
        <name>dimethylallyl diphosphate</name>
        <dbReference type="ChEBI" id="CHEBI:57623"/>
    </ligand>
</feature>
<feature type="binding site" evidence="1">
    <location>
        <position position="248"/>
    </location>
    <ligand>
        <name>isopentenyl diphosphate</name>
        <dbReference type="ChEBI" id="CHEBI:128769"/>
    </ligand>
</feature>
<feature type="binding site" evidence="1">
    <location>
        <position position="249"/>
    </location>
    <ligand>
        <name>(2E)-4-hydroxy-3-methylbut-2-enyl diphosphate</name>
        <dbReference type="ChEBI" id="CHEBI:128753"/>
    </ligand>
</feature>
<feature type="binding site" evidence="1">
    <location>
        <position position="249"/>
    </location>
    <ligand>
        <name>dimethylallyl diphosphate</name>
        <dbReference type="ChEBI" id="CHEBI:57623"/>
    </ligand>
</feature>
<feature type="binding site" evidence="1">
    <location>
        <position position="249"/>
    </location>
    <ligand>
        <name>isopentenyl diphosphate</name>
        <dbReference type="ChEBI" id="CHEBI:128769"/>
    </ligand>
</feature>
<feature type="binding site" evidence="1">
    <location>
        <position position="292"/>
    </location>
    <ligand>
        <name>(2E)-4-hydroxy-3-methylbut-2-enyl diphosphate</name>
        <dbReference type="ChEBI" id="CHEBI:128753"/>
    </ligand>
</feature>
<feature type="binding site" evidence="1">
    <location>
        <position position="292"/>
    </location>
    <ligand>
        <name>dimethylallyl diphosphate</name>
        <dbReference type="ChEBI" id="CHEBI:57623"/>
    </ligand>
</feature>
<feature type="binding site" evidence="1">
    <location>
        <position position="292"/>
    </location>
    <ligand>
        <name>isopentenyl diphosphate</name>
        <dbReference type="ChEBI" id="CHEBI:128769"/>
    </ligand>
</feature>
<keyword id="KW-0004">4Fe-4S</keyword>
<keyword id="KW-0408">Iron</keyword>
<keyword id="KW-0411">Iron-sulfur</keyword>
<keyword id="KW-0414">Isoprene biosynthesis</keyword>
<keyword id="KW-0479">Metal-binding</keyword>
<keyword id="KW-0560">Oxidoreductase</keyword>
<keyword id="KW-1185">Reference proteome</keyword>
<name>ISPH2_MYCTU</name>
<accession>P9WKG1</accession>
<accession>L0T8I1</accession>
<accession>O53458</accession>
<accession>P0A5I0</accession>
<protein>
    <recommendedName>
        <fullName evidence="1 4 5">4-hydroxy-3-methylbut-2-enyl diphosphate reductase 2</fullName>
        <shortName evidence="5">HDR 2</shortName>
        <shortName evidence="1">HMBPP reductase 2</shortName>
        <ecNumber evidence="1 7">1.17.7.4</ecNumber>
    </recommendedName>
</protein>
<organism>
    <name type="scientific">Mycobacterium tuberculosis (strain ATCC 25618 / H37Rv)</name>
    <dbReference type="NCBI Taxonomy" id="83332"/>
    <lineage>
        <taxon>Bacteria</taxon>
        <taxon>Bacillati</taxon>
        <taxon>Actinomycetota</taxon>
        <taxon>Actinomycetes</taxon>
        <taxon>Mycobacteriales</taxon>
        <taxon>Mycobacteriaceae</taxon>
        <taxon>Mycobacterium</taxon>
        <taxon>Mycobacterium tuberculosis complex</taxon>
    </lineage>
</organism>
<comment type="function">
    <text evidence="1 2 3">Catalyzes the conversion of 1-hydroxy-2-methyl-2-(E)-butenyl 4-diphosphate (HMBPP) into a mixture of isopentenyl diphosphate (IPP) and dimethylallyl diphosphate (DMAPP) (PubMed:23091471). Acts in the terminal step of the DOXP/MEP pathway for isoprenoid precursor biosynthesis. Has a higher activity compared with LytB2 (PubMed:23091471). Is essential for M.tuberculosis growth in vitro (PubMed:26309039).</text>
</comment>
<comment type="catalytic activity">
    <reaction evidence="1 7">
        <text>isopentenyl diphosphate + 2 oxidized [2Fe-2S]-[ferredoxin] + H2O = (2E)-4-hydroxy-3-methylbut-2-enyl diphosphate + 2 reduced [2Fe-2S]-[ferredoxin] + 2 H(+)</text>
        <dbReference type="Rhea" id="RHEA:24488"/>
        <dbReference type="Rhea" id="RHEA-COMP:10000"/>
        <dbReference type="Rhea" id="RHEA-COMP:10001"/>
        <dbReference type="ChEBI" id="CHEBI:15377"/>
        <dbReference type="ChEBI" id="CHEBI:15378"/>
        <dbReference type="ChEBI" id="CHEBI:33737"/>
        <dbReference type="ChEBI" id="CHEBI:33738"/>
        <dbReference type="ChEBI" id="CHEBI:128753"/>
        <dbReference type="ChEBI" id="CHEBI:128769"/>
        <dbReference type="EC" id="1.17.7.4"/>
    </reaction>
</comment>
<comment type="catalytic activity">
    <reaction evidence="1 7">
        <text>dimethylallyl diphosphate + 2 oxidized [2Fe-2S]-[ferredoxin] + H2O = (2E)-4-hydroxy-3-methylbut-2-enyl diphosphate + 2 reduced [2Fe-2S]-[ferredoxin] + 2 H(+)</text>
        <dbReference type="Rhea" id="RHEA:24825"/>
        <dbReference type="Rhea" id="RHEA-COMP:10000"/>
        <dbReference type="Rhea" id="RHEA-COMP:10001"/>
        <dbReference type="ChEBI" id="CHEBI:15377"/>
        <dbReference type="ChEBI" id="CHEBI:15378"/>
        <dbReference type="ChEBI" id="CHEBI:33737"/>
        <dbReference type="ChEBI" id="CHEBI:33738"/>
        <dbReference type="ChEBI" id="CHEBI:57623"/>
        <dbReference type="ChEBI" id="CHEBI:128753"/>
        <dbReference type="EC" id="1.17.7.4"/>
    </reaction>
</comment>
<comment type="cofactor">
    <cofactor evidence="1">
        <name>[4Fe-4S] cluster</name>
        <dbReference type="ChEBI" id="CHEBI:49883"/>
    </cofactor>
    <text evidence="1">Binds 1 [4Fe-4S] cluster per subunit.</text>
</comment>
<comment type="pathway">
    <text evidence="1">Isoprenoid biosynthesis; dimethylallyl diphosphate biosynthesis; dimethylallyl diphosphate from (2E)-4-hydroxy-3-methylbutenyl diphosphate: step 1/1.</text>
</comment>
<comment type="pathway">
    <text evidence="1">Isoprenoid biosynthesis; isopentenyl diphosphate biosynthesis via DXP pathway; isopentenyl diphosphate from 1-deoxy-D-xylulose 5-phosphate: step 6/6.</text>
</comment>
<comment type="disruption phenotype">
    <text evidence="3">The lytB2 gene cannot be deleted, unless an additional copy is provided elsewhere, demonstrating that this is the essential homolog. lytB1 cannot complement for loss of function of lytB2, but the sole LytB homolog of M.smegmatis is able to compensate for loss of LytB2 in M.tuberculosis.</text>
</comment>
<comment type="similarity">
    <text evidence="1">Belongs to the IspH family.</text>
</comment>
<dbReference type="EC" id="1.17.7.4" evidence="1 7"/>
<dbReference type="EMBL" id="AL123456">
    <property type="protein sequence ID" value="CCP43863.1"/>
    <property type="molecule type" value="Genomic_DNA"/>
</dbReference>
<dbReference type="PIR" id="D70898">
    <property type="entry name" value="D70898"/>
</dbReference>
<dbReference type="RefSeq" id="WP_003405853.1">
    <property type="nucleotide sequence ID" value="NZ_NVQJ01000021.1"/>
</dbReference>
<dbReference type="RefSeq" id="YP_177788.1">
    <property type="nucleotide sequence ID" value="NC_000962.3"/>
</dbReference>
<dbReference type="SMR" id="P9WKG1"/>
<dbReference type="FunCoup" id="P9WKG1">
    <property type="interactions" value="146"/>
</dbReference>
<dbReference type="STRING" id="83332.Rv1110"/>
<dbReference type="PaxDb" id="83332-Rv1110"/>
<dbReference type="DNASU" id="885830"/>
<dbReference type="GeneID" id="885830"/>
<dbReference type="KEGG" id="mtu:Rv1110"/>
<dbReference type="KEGG" id="mtv:RVBD_1110"/>
<dbReference type="TubercuList" id="Rv1110"/>
<dbReference type="eggNOG" id="COG0761">
    <property type="taxonomic scope" value="Bacteria"/>
</dbReference>
<dbReference type="InParanoid" id="P9WKG1"/>
<dbReference type="OrthoDB" id="9804068at2"/>
<dbReference type="PhylomeDB" id="P9WKG1"/>
<dbReference type="UniPathway" id="UPA00056">
    <property type="reaction ID" value="UER00097"/>
</dbReference>
<dbReference type="UniPathway" id="UPA00059">
    <property type="reaction ID" value="UER00105"/>
</dbReference>
<dbReference type="Proteomes" id="UP000001584">
    <property type="component" value="Chromosome"/>
</dbReference>
<dbReference type="GO" id="GO:0005829">
    <property type="term" value="C:cytosol"/>
    <property type="evidence" value="ECO:0000318"/>
    <property type="project" value="GO_Central"/>
</dbReference>
<dbReference type="GO" id="GO:0051539">
    <property type="term" value="F:4 iron, 4 sulfur cluster binding"/>
    <property type="evidence" value="ECO:0007669"/>
    <property type="project" value="UniProtKB-UniRule"/>
</dbReference>
<dbReference type="GO" id="GO:0051745">
    <property type="term" value="F:4-hydroxy-3-methylbut-2-enyl diphosphate reductase activity"/>
    <property type="evidence" value="ECO:0000318"/>
    <property type="project" value="GO_Central"/>
</dbReference>
<dbReference type="GO" id="GO:0046872">
    <property type="term" value="F:metal ion binding"/>
    <property type="evidence" value="ECO:0007669"/>
    <property type="project" value="UniProtKB-KW"/>
</dbReference>
<dbReference type="GO" id="GO:0050992">
    <property type="term" value="P:dimethylallyl diphosphate biosynthetic process"/>
    <property type="evidence" value="ECO:0007669"/>
    <property type="project" value="UniProtKB-UniRule"/>
</dbReference>
<dbReference type="GO" id="GO:0019288">
    <property type="term" value="P:isopentenyl diphosphate biosynthetic process, methylerythritol 4-phosphate pathway"/>
    <property type="evidence" value="ECO:0000318"/>
    <property type="project" value="GO_Central"/>
</dbReference>
<dbReference type="GO" id="GO:0016114">
    <property type="term" value="P:terpenoid biosynthetic process"/>
    <property type="evidence" value="ECO:0007669"/>
    <property type="project" value="UniProtKB-UniRule"/>
</dbReference>
<dbReference type="CDD" id="cd13944">
    <property type="entry name" value="lytB_ispH"/>
    <property type="match status" value="1"/>
</dbReference>
<dbReference type="Gene3D" id="3.40.50.11270">
    <property type="match status" value="1"/>
</dbReference>
<dbReference type="Gene3D" id="3.40.1010.20">
    <property type="entry name" value="4-hydroxy-3-methylbut-2-enyl diphosphate reductase, catalytic domain"/>
    <property type="match status" value="2"/>
</dbReference>
<dbReference type="HAMAP" id="MF_00191">
    <property type="entry name" value="IspH"/>
    <property type="match status" value="1"/>
</dbReference>
<dbReference type="InterPro" id="IPR003451">
    <property type="entry name" value="LytB/IspH"/>
</dbReference>
<dbReference type="NCBIfam" id="TIGR00216">
    <property type="entry name" value="ispH_lytB"/>
    <property type="match status" value="1"/>
</dbReference>
<dbReference type="NCBIfam" id="NF002188">
    <property type="entry name" value="PRK01045.1-2"/>
    <property type="match status" value="1"/>
</dbReference>
<dbReference type="NCBIfam" id="NF002189">
    <property type="entry name" value="PRK01045.1-3"/>
    <property type="match status" value="1"/>
</dbReference>
<dbReference type="NCBIfam" id="NF002190">
    <property type="entry name" value="PRK01045.1-4"/>
    <property type="match status" value="1"/>
</dbReference>
<dbReference type="PANTHER" id="PTHR30426">
    <property type="entry name" value="4-HYDROXY-3-METHYLBUT-2-ENYL DIPHOSPHATE REDUCTASE"/>
    <property type="match status" value="1"/>
</dbReference>
<dbReference type="PANTHER" id="PTHR30426:SF0">
    <property type="entry name" value="4-HYDROXY-3-METHYLBUT-2-ENYL DIPHOSPHATE REDUCTASE"/>
    <property type="match status" value="1"/>
</dbReference>
<dbReference type="Pfam" id="PF02401">
    <property type="entry name" value="LYTB"/>
    <property type="match status" value="1"/>
</dbReference>